<gene>
    <name evidence="6" type="primary">abpB</name>
    <name type="synonym">yfjK</name>
    <name type="ordered locus">b2627</name>
    <name type="ordered locus">JW2608</name>
</gene>
<sequence>MTEIYEQAKHSLQGEDFSSFNYLFAVNKLLSNPVSYDLGRDLIVRALDSRERFSEHTTILKNMVRKSGLFPYLKKEFTSLTPDDLRVLELYRTPFSDGYVFHSMQFHIFDLLKSGQNVVLSAPTSMGKSAIVDSLLGMGTLKRLVLVVPTVALADETRRRLQERFGDRYQIIHHSSQVCHSDQAVYVLTQERVNERDDIVDIDLFVIDEFYKLAFRQLKSGDIDHQDERVIELNIALSKLLKVSRQFYLTGPFVNSIRGLEKLGYPHTFVSTDFNTVALDVKTFGIKANDDKAKLKALGEIAHACVDATIIYCKSPTVAGLVARELIRLGHGTPTENPHVDWVSEEFDADWDYTVALRNGIGLHFGALPRALQQYTADQFNAGKLRFLLCTSTIIEGVNTIAKNVVIYDNRDGTRSIDKFTHGNIKGRAGRMGVHFVGKIFCLEEIPEDNLNQEVDIPLGIQGIDTPINLLASVQPDHLSEFSQDRFDEVFINDRVSIDLVKKHSYFRVEQFEMLQSMFEMMDDNEFSSLVFHWTPATNFLKTFAKIIARLVPHTFSRNGVPVKPTDVMIAKLAGYLSAESYSEYLKNQIDYARQWISEGEKRTLSIALNNDLKLITNTFGYTLPKVLSLMEDVVKHHAVKRGIRSKVDYTHVKLAFESFHLPPGVNALEEIGIPIQTLHRLVDLLEFSDEADVDELSQYLRDTQDIWSRSIGYVDQMFIRRALGIRRH</sequence>
<reference key="1">
    <citation type="journal article" date="1997" name="Science">
        <title>The complete genome sequence of Escherichia coli K-12.</title>
        <authorList>
            <person name="Blattner F.R."/>
            <person name="Plunkett G. III"/>
            <person name="Bloch C.A."/>
            <person name="Perna N.T."/>
            <person name="Burland V."/>
            <person name="Riley M."/>
            <person name="Collado-Vides J."/>
            <person name="Glasner J.D."/>
            <person name="Rode C.K."/>
            <person name="Mayhew G.F."/>
            <person name="Gregor J."/>
            <person name="Davis N.W."/>
            <person name="Kirkpatrick H.A."/>
            <person name="Goeden M.A."/>
            <person name="Rose D.J."/>
            <person name="Mau B."/>
            <person name="Shao Y."/>
        </authorList>
    </citation>
    <scope>NUCLEOTIDE SEQUENCE [LARGE SCALE GENOMIC DNA]</scope>
    <source>
        <strain>K12 / MG1655 / ATCC 47076</strain>
    </source>
</reference>
<reference key="2">
    <citation type="journal article" date="2006" name="Mol. Syst. Biol.">
        <title>Highly accurate genome sequences of Escherichia coli K-12 strains MG1655 and W3110.</title>
        <authorList>
            <person name="Hayashi K."/>
            <person name="Morooka N."/>
            <person name="Yamamoto Y."/>
            <person name="Fujita K."/>
            <person name="Isono K."/>
            <person name="Choi S."/>
            <person name="Ohtsubo E."/>
            <person name="Baba T."/>
            <person name="Wanner B.L."/>
            <person name="Mori H."/>
            <person name="Horiuchi T."/>
        </authorList>
    </citation>
    <scope>NUCLEOTIDE SEQUENCE [LARGE SCALE GENOMIC DNA]</scope>
    <source>
        <strain>K12 / W3110 / ATCC 27325 / DSM 5911</strain>
    </source>
</reference>
<reference key="3">
    <citation type="journal article" date="2014" name="Genes Genet. Syst.">
        <title>AbpA and AbpB provide anti-phage activity in Escherichia coli.</title>
        <authorList>
            <person name="Yasui R."/>
            <person name="Washizaki A."/>
            <person name="Furihata Y."/>
            <person name="Yonesaki T."/>
            <person name="Otsuka Y."/>
        </authorList>
    </citation>
    <scope>FUNCTION IN ANTIVIRAL DEFENSE</scope>
    <scope>INTERACTION WITH ABPA</scope>
    <scope>SUBUNIT</scope>
    <scope>DISRUPTION PHENOTYPE</scope>
    <source>
        <strain>K12 /MH1</strain>
    </source>
</reference>
<reference key="4">
    <citation type="journal article" date="2014" name="Elife">
        <title>Evolution of extreme resistance to ionizing radiation via genetic adaptation of DNA repair.</title>
        <authorList>
            <person name="Byrne R.T."/>
            <person name="Klingele A.J."/>
            <person name="Cabot E.L."/>
            <person name="Schackwitz W.S."/>
            <person name="Martin J.A."/>
            <person name="Martin J."/>
            <person name="Wang Z."/>
            <person name="Wood E.A."/>
            <person name="Pennacchio C."/>
            <person name="Pennacchio L.A."/>
            <person name="Perna N.T."/>
            <person name="Battista J.R."/>
            <person name="Cox M.M."/>
        </authorList>
    </citation>
    <scope>FUNCTION IN RADIATION RESISTANCE</scope>
    <scope>DISRUPTION PHENOTYPE</scope>
    <scope>MUTAGENESIS OF ALA-152</scope>
    <source>
        <strain>K12</strain>
    </source>
</reference>
<feature type="chain" id="PRO_0000169276" description="Anti-bacteriophage protein B">
    <location>
        <begin position="1"/>
        <end position="729"/>
    </location>
</feature>
<feature type="domain" description="Helicase ATP-binding" evidence="1">
    <location>
        <begin position="109"/>
        <end position="271"/>
    </location>
</feature>
<feature type="domain" description="Helicase C-terminal" evidence="2">
    <location>
        <begin position="297"/>
        <end position="472"/>
    </location>
</feature>
<feature type="binding site" evidence="1">
    <location>
        <begin position="122"/>
        <end position="129"/>
    </location>
    <ligand>
        <name>ATP</name>
        <dbReference type="ChEBI" id="CHEBI:30616"/>
    </ligand>
</feature>
<feature type="mutagenesis site" description="100-fold increased survival following 3000 Gy ionizing radiation." evidence="3">
    <original>A</original>
    <variation>D</variation>
    <location>
        <position position="152"/>
    </location>
</feature>
<comment type="function">
    <text evidence="4">Part of an antiviral system composed of AbpA and AbpB; when both are expressed from a plasmid they confer resistance to phages T2, T4, T7 and lambda but not RB32 or RB69. Resistance is temperature dependent, it can be seen at 30 degrees Celsius but not at 37 or 42 degrees Celsius. The system impairs phage but not bacterial DNA synthesis (shown for T4, T7 and lambda). Partially suppressed by mutations in T4 gene 41, a replicative helicase.</text>
</comment>
<comment type="function">
    <text evidence="3">Deletion or mutations in this gene were selected in directed evolution experiments for resistance to intense ionizing radiation (3000 Gy).</text>
</comment>
<comment type="subunit">
    <text evidence="4">Interacts with AbpB.</text>
</comment>
<comment type="disruption phenotype">
    <text evidence="3 4">About 20% increase in T4 progeny; the phenotype is the same in a double abpA-abpB deletion (PubMed:25224971). 10-fold increased survival following 3000 Gy ionizing radiation (PubMed:24596148).</text>
</comment>
<comment type="miscellaneous">
    <text evidence="5">Part of prophage CP4-57.</text>
</comment>
<comment type="similarity">
    <text evidence="7">Belongs to the helicase family.</text>
</comment>
<proteinExistence type="evidence at protein level"/>
<keyword id="KW-0051">Antiviral defense</keyword>
<keyword id="KW-0067">ATP-binding</keyword>
<keyword id="KW-0347">Helicase</keyword>
<keyword id="KW-0378">Hydrolase</keyword>
<keyword id="KW-0547">Nucleotide-binding</keyword>
<keyword id="KW-1185">Reference proteome</keyword>
<keyword id="KW-0346">Stress response</keyword>
<protein>
    <recommendedName>
        <fullName evidence="6">Anti-bacteriophage protein B</fullName>
    </recommendedName>
    <alternativeName>
        <fullName evidence="7">Probable helicase AbpB</fullName>
    </alternativeName>
</protein>
<accession>P52126</accession>
<accession>Q2MAE4</accession>
<dbReference type="EMBL" id="U36840">
    <property type="protein sequence ID" value="AAA79796.1"/>
    <property type="molecule type" value="Genomic_DNA"/>
</dbReference>
<dbReference type="EMBL" id="U00096">
    <property type="protein sequence ID" value="AAC75675.1"/>
    <property type="molecule type" value="Genomic_DNA"/>
</dbReference>
<dbReference type="EMBL" id="AP009048">
    <property type="protein sequence ID" value="BAE76762.1"/>
    <property type="molecule type" value="Genomic_DNA"/>
</dbReference>
<dbReference type="PIR" id="T08639">
    <property type="entry name" value="T08639"/>
</dbReference>
<dbReference type="RefSeq" id="NP_417116.1">
    <property type="nucleotide sequence ID" value="NC_000913.3"/>
</dbReference>
<dbReference type="RefSeq" id="WP_000136402.1">
    <property type="nucleotide sequence ID" value="NZ_LN832404.1"/>
</dbReference>
<dbReference type="SMR" id="P52126"/>
<dbReference type="BioGRID" id="4260623">
    <property type="interactions" value="89"/>
</dbReference>
<dbReference type="BioGRID" id="851446">
    <property type="interactions" value="3"/>
</dbReference>
<dbReference type="DIP" id="DIP-12076N"/>
<dbReference type="FunCoup" id="P52126">
    <property type="interactions" value="23"/>
</dbReference>
<dbReference type="IntAct" id="P52126">
    <property type="interactions" value="23"/>
</dbReference>
<dbReference type="STRING" id="511145.b2627"/>
<dbReference type="PaxDb" id="511145-b2627"/>
<dbReference type="EnsemblBacteria" id="AAC75675">
    <property type="protein sequence ID" value="AAC75675"/>
    <property type="gene ID" value="b2627"/>
</dbReference>
<dbReference type="GeneID" id="947111"/>
<dbReference type="KEGG" id="ecj:JW2608"/>
<dbReference type="KEGG" id="eco:b2627"/>
<dbReference type="KEGG" id="ecoc:C3026_14535"/>
<dbReference type="PATRIC" id="fig|511145.12.peg.2722"/>
<dbReference type="EchoBASE" id="EB2989"/>
<dbReference type="eggNOG" id="COG1204">
    <property type="taxonomic scope" value="Bacteria"/>
</dbReference>
<dbReference type="HOGENOM" id="CLU_025497_0_0_6"/>
<dbReference type="InParanoid" id="P52126"/>
<dbReference type="OMA" id="GAQFYML"/>
<dbReference type="OrthoDB" id="9815222at2"/>
<dbReference type="BioCyc" id="EcoCyc:G7362-MONOMER"/>
<dbReference type="PRO" id="PR:P52126"/>
<dbReference type="Proteomes" id="UP000000625">
    <property type="component" value="Chromosome"/>
</dbReference>
<dbReference type="GO" id="GO:0005524">
    <property type="term" value="F:ATP binding"/>
    <property type="evidence" value="ECO:0007669"/>
    <property type="project" value="UniProtKB-KW"/>
</dbReference>
<dbReference type="GO" id="GO:0004386">
    <property type="term" value="F:helicase activity"/>
    <property type="evidence" value="ECO:0007669"/>
    <property type="project" value="UniProtKB-KW"/>
</dbReference>
<dbReference type="GO" id="GO:0016787">
    <property type="term" value="F:hydrolase activity"/>
    <property type="evidence" value="ECO:0007669"/>
    <property type="project" value="UniProtKB-KW"/>
</dbReference>
<dbReference type="GO" id="GO:0003676">
    <property type="term" value="F:nucleic acid binding"/>
    <property type="evidence" value="ECO:0007669"/>
    <property type="project" value="InterPro"/>
</dbReference>
<dbReference type="GO" id="GO:0051607">
    <property type="term" value="P:defense response to virus"/>
    <property type="evidence" value="ECO:0000315"/>
    <property type="project" value="EcoCyc"/>
</dbReference>
<dbReference type="GO" id="GO:0010212">
    <property type="term" value="P:response to ionizing radiation"/>
    <property type="evidence" value="ECO:0000315"/>
    <property type="project" value="EcoCyc"/>
</dbReference>
<dbReference type="Gene3D" id="3.40.50.300">
    <property type="entry name" value="P-loop containing nucleotide triphosphate hydrolases"/>
    <property type="match status" value="2"/>
</dbReference>
<dbReference type="InterPro" id="IPR011545">
    <property type="entry name" value="DEAD/DEAH_box_helicase_dom"/>
</dbReference>
<dbReference type="InterPro" id="IPR014001">
    <property type="entry name" value="Helicase_ATP-bd"/>
</dbReference>
<dbReference type="InterPro" id="IPR001650">
    <property type="entry name" value="Helicase_C-like"/>
</dbReference>
<dbReference type="InterPro" id="IPR027417">
    <property type="entry name" value="P-loop_NTPase"/>
</dbReference>
<dbReference type="InterPro" id="IPR050699">
    <property type="entry name" value="RNA-DNA_Helicase"/>
</dbReference>
<dbReference type="PANTHER" id="PTHR12131">
    <property type="entry name" value="ATP-DEPENDENT RNA AND DNA HELICASE"/>
    <property type="match status" value="1"/>
</dbReference>
<dbReference type="PANTHER" id="PTHR12131:SF1">
    <property type="entry name" value="ATP-DEPENDENT RNA HELICASE SUPV3L1, MITOCHONDRIAL-RELATED"/>
    <property type="match status" value="1"/>
</dbReference>
<dbReference type="Pfam" id="PF00270">
    <property type="entry name" value="DEAD"/>
    <property type="match status" value="1"/>
</dbReference>
<dbReference type="Pfam" id="PF00271">
    <property type="entry name" value="Helicase_C"/>
    <property type="match status" value="1"/>
</dbReference>
<dbReference type="SMART" id="SM00487">
    <property type="entry name" value="DEXDc"/>
    <property type="match status" value="1"/>
</dbReference>
<dbReference type="SMART" id="SM00490">
    <property type="entry name" value="HELICc"/>
    <property type="match status" value="1"/>
</dbReference>
<dbReference type="SUPFAM" id="SSF52540">
    <property type="entry name" value="P-loop containing nucleoside triphosphate hydrolases"/>
    <property type="match status" value="2"/>
</dbReference>
<dbReference type="PROSITE" id="PS51192">
    <property type="entry name" value="HELICASE_ATP_BIND_1"/>
    <property type="match status" value="1"/>
</dbReference>
<dbReference type="PROSITE" id="PS51194">
    <property type="entry name" value="HELICASE_CTER"/>
    <property type="match status" value="1"/>
</dbReference>
<organism>
    <name type="scientific">Escherichia coli (strain K12)</name>
    <dbReference type="NCBI Taxonomy" id="83333"/>
    <lineage>
        <taxon>Bacteria</taxon>
        <taxon>Pseudomonadati</taxon>
        <taxon>Pseudomonadota</taxon>
        <taxon>Gammaproteobacteria</taxon>
        <taxon>Enterobacterales</taxon>
        <taxon>Enterobacteriaceae</taxon>
        <taxon>Escherichia</taxon>
    </lineage>
</organism>
<evidence type="ECO:0000255" key="1">
    <source>
        <dbReference type="PROSITE-ProRule" id="PRU00541"/>
    </source>
</evidence>
<evidence type="ECO:0000255" key="2">
    <source>
        <dbReference type="PROSITE-ProRule" id="PRU00542"/>
    </source>
</evidence>
<evidence type="ECO:0000269" key="3">
    <source>
    </source>
</evidence>
<evidence type="ECO:0000269" key="4">
    <source>
    </source>
</evidence>
<evidence type="ECO:0000269" key="5">
    <source>
    </source>
</evidence>
<evidence type="ECO:0000303" key="6">
    <source>
    </source>
</evidence>
<evidence type="ECO:0000305" key="7"/>
<name>ABPB_ECOLI</name>